<reference key="1">
    <citation type="journal article" date="2006" name="J. Gen. Virol.">
        <title>Kaposi's sarcoma-associated herpesvirus immune modulation: an overview.</title>
        <authorList>
            <person name="Rezaee S.A.R."/>
            <person name="Cunningham C."/>
            <person name="Davison A.J."/>
            <person name="Blackbourn D.J."/>
        </authorList>
    </citation>
    <scope>NUCLEOTIDE SEQUENCE [LARGE SCALE GENOMIC DNA]</scope>
</reference>
<reference key="2">
    <citation type="journal article" date="2009" name="J. Virol.">
        <title>Kaposi's sarcoma-associated herpesvirus encodes a viral deubiquitinase.</title>
        <authorList>
            <person name="Gonzalez C.M."/>
            <person name="Wang L."/>
            <person name="Damania B."/>
        </authorList>
    </citation>
    <scope>FUNCTION</scope>
</reference>
<protein>
    <recommendedName>
        <fullName evidence="1">Large tegument protein deneddylase</fullName>
        <ecNumber evidence="1">3.4.19.12</ecNumber>
        <ecNumber evidence="1">3.4.22.-</ecNumber>
    </recommendedName>
</protein>
<organismHost>
    <name type="scientific">Homo sapiens</name>
    <name type="common">Human</name>
    <dbReference type="NCBI Taxonomy" id="9606"/>
</organismHost>
<keyword id="KW-0002">3D-structure</keyword>
<keyword id="KW-1035">Host cytoplasm</keyword>
<keyword id="KW-1048">Host nucleus</keyword>
<keyword id="KW-0945">Host-virus interaction</keyword>
<keyword id="KW-0378">Hydrolase</keyword>
<keyword id="KW-1127">Modulation of host ubiquitin pathway by viral deubiquitinase</keyword>
<keyword id="KW-1130">Modulation of host ubiquitin pathway by virus</keyword>
<keyword id="KW-0645">Protease</keyword>
<keyword id="KW-1185">Reference proteome</keyword>
<keyword id="KW-0677">Repeat</keyword>
<keyword id="KW-0788">Thiol protease</keyword>
<keyword id="KW-0833">Ubl conjugation pathway</keyword>
<keyword id="KW-0946">Virion</keyword>
<keyword id="KW-0920">Virion tegument</keyword>
<feature type="chain" id="PRO_0000406914" description="Large tegument protein deneddylase">
    <location>
        <begin position="1"/>
        <end position="2635"/>
    </location>
</feature>
<feature type="domain" description="Peptidase C76" evidence="1">
    <location>
        <begin position="9"/>
        <end position="223"/>
    </location>
</feature>
<feature type="region of interest" description="Deubiquitination activity" evidence="1">
    <location>
        <begin position="1"/>
        <end position="233"/>
    </location>
</feature>
<feature type="region of interest" description="Disordered" evidence="2">
    <location>
        <begin position="243"/>
        <end position="497"/>
    </location>
</feature>
<feature type="region of interest" description="Interaction with inner tegument protein" evidence="1">
    <location>
        <begin position="316"/>
        <end position="325"/>
    </location>
</feature>
<feature type="region of interest" description="Disordered" evidence="2">
    <location>
        <begin position="2238"/>
        <end position="2269"/>
    </location>
</feature>
<feature type="region of interest" description="Disordered" evidence="2">
    <location>
        <begin position="2357"/>
        <end position="2438"/>
    </location>
</feature>
<feature type="region of interest" description="Disordered" evidence="2">
    <location>
        <begin position="2500"/>
        <end position="2533"/>
    </location>
</feature>
<feature type="compositionally biased region" description="Low complexity" evidence="2">
    <location>
        <begin position="245"/>
        <end position="255"/>
    </location>
</feature>
<feature type="compositionally biased region" description="Basic and acidic residues" evidence="2">
    <location>
        <begin position="256"/>
        <end position="270"/>
    </location>
</feature>
<feature type="compositionally biased region" description="Basic and acidic residues" evidence="2">
    <location>
        <begin position="282"/>
        <end position="295"/>
    </location>
</feature>
<feature type="compositionally biased region" description="Basic and acidic residues" evidence="2">
    <location>
        <begin position="330"/>
        <end position="346"/>
    </location>
</feature>
<feature type="compositionally biased region" description="Low complexity" evidence="2">
    <location>
        <begin position="448"/>
        <end position="461"/>
    </location>
</feature>
<feature type="compositionally biased region" description="Low complexity" evidence="2">
    <location>
        <begin position="2379"/>
        <end position="2402"/>
    </location>
</feature>
<feature type="compositionally biased region" description="Basic and acidic residues" evidence="2">
    <location>
        <begin position="2425"/>
        <end position="2437"/>
    </location>
</feature>
<feature type="active site" evidence="1">
    <location>
        <position position="29"/>
    </location>
</feature>
<feature type="active site" evidence="1">
    <location>
        <position position="159"/>
    </location>
</feature>
<feature type="active site" evidence="1">
    <location>
        <position position="161"/>
    </location>
</feature>
<feature type="site" description="Important for catalytic activity" evidence="1">
    <location>
        <position position="16"/>
    </location>
</feature>
<sequence length="2635" mass="289691">MAAQPLYMEGMASTHQANCIFGEHAGSQCLSNCVMYLASSYYNSETPLVDRASLDDVLEQGMRLDLLLRKSGMLGFRQYAQLHHIPGFLRTDDWATKIFQSPEFYGLIGQDAAIREPFIESLRSVLSRNYAGTVQYLIIICQSKAGAIVVKDKTYYMFDPHCIPNIPNSPAHVIKTNDVGVLLPYIATHDTEYTGCFLYFIPHDYISPEHYIANHYRTIVFEELHGPRMDISRGVESCSITEITSPSVSPAPSEAPLRRDSTQSQDETRPRRPRVVIPPYDPTDRPRPPHQDRPPEQAAGYGGNKGRGGNKGRGGKTGRGGNEGRGGHQPPDEHQPPHITAEHMDQSDGQGADGDMDSTPANGETSVTETPGPEPNPPARPDREPPPTPPATPGATALLSDLTATRGQKRKFSSLKESYPIDSPPSDDDDVSQPSQQTAPDTEDIWIDDPLTPLYPLTDTPSFDITADVTPDNTHPEKAADGDFTNKTTSTDADRYASASQESLGTLVSPYDFTNLDTLLAELGRLGTAQPIPVIVDRLTSRPFREASALQAMDRILTHVVLEYGLVSGYSTAAPSKCTHVLQFFILWGEKLGIPTEDAKTLLESALEIPAMCEIVQQGRLKEPTFSRHIISKLNPCLESLHATSRQDFKSLIQAFNAEGIRIASRERETSMAELIETITARLKPNFNIVCARQDAQTIQDGVGLLRAEVNKRNAQIAQEAAYFENIITALSTFQPPPQSQQTFEVLPDLKLRTLVEHLTLVEAQVTTQTVESLQAYLQSAATAEHHLTNVPNVHSILSNISNTLKVIDYVIPKFIINTDTLAPYKQQFSYLGGELASMFSLDWPHAPAEAVEPLPVLTSLRGKIAEALTRQENKNAVDQILTDAEGLLKNITDPNGAHFHAQAVSIPVLENYVHNAGVLLKGEKSERFSRLKTAIQNLVSSESFITVTLHSTNLGNLVTNVPKLGEAFTGGPHLLTSPSVRQSLSTLCTTLLRDALDALEKKDPALLGEGTTLALETLLGYGSVQDYKETVQIISSLVGIQKLVRDQGADKWATAVTRLTDLKSTLATTAIETATKRKLYRLIQRDLKEAQKHETNRAMEEWKQKVLALDNASPERVATLLQQAPTAKAREFAEKHFKILLPVPADAPVQASPTPMEYSASPLPDPKDIDRATSIHGEQAWKKIQQAFKDFNFAVLRPADWDALAAEYQRRGSPLPAAVGPALSGFLETILGTLNDIYMDKLRSFLPDAQPFQAPPFDWLTPYQDQVSFFLRTIGLPLVRALADKISVQALRLSHALQSGDLQQATVGTPLELPATEYARIASNMKSVFNDHGLQVRSEVADYVEAQRADAHTPHVPRPKIQAPKTLIPHPDAIVADGLPAFLKTSLLQQEAKLLALQRADFESLESDMRAAEAQRKASREETQRKMAHAITQLLQQAPSAISGRPLSLQDPVGFLEGIIYDKVLERESYETGLEGLSWLEQTIKSITVYAPVEEKQRMHVLLDEVKKQRANTETALELEAAATHGDDARLLQRAVDELSPLRVKGGKAAVESWRQKIQTLKSLVQEAEQAGLLLATIDTVAGQAQETISPSTLQGLYQQGQEAMAAIKRFRDSPQLAGLQEKLAELQQYVKYKKQYLEHFEATQSVVFTAFPLTQEVTIPALHYAGPFDNLERLSRYLHIGQTQPAPGQWLLTLPTFDPTRPACVPAGGHEPPLHRQVVFSSFLEAQIRLALSVAGPVPGRGLPGTPQIRRGVEAAACFLHQWDEISRLLPEVLDTFFHNAPLPAESSSNAFLAMCVLTHLVYLAGRAVLGPREPEHAAPDAYPREVALAPRDLTYLLLAMWPSWISAILKQPSHAEAAHACLVTLPTMLKAVPYLTLEASAGPLPADMRHFATPEARLFFPARWHHVNVQEKLWLRNDFMSLCHRSPGRARIAVLVWAVTCLDPEVIRQLWSTLRPLTADESDTASGLLRVLVEMEFGPPPKTPRREAVAPGATLPPYPYGLATGERLVGQAQERSGGAGKMPVSGFEIVLGALLFRAPLRIFSTASTHRISDFEGGFQILTPLLDCCPDREPFASLAAAPRRTVPLGDPCANIHTPEEIQIFARQAAWLQYTFANYQIPSTDNPIPIVVLNANNNLENSYIPRDRKADPLRPFYVVPLKPQGRWPEIMTTATTPCRLPTSPEEAGSQFARLLQSQVSATWSDIFSRVPERLAPNAPQKSSQTMSEIHEVAATPPLTITPNKPTGTPHVSPEADPITERKRGQQPKIVADNMPSRILPSLPTPKPREPRITLPHALPVISPPAHRPSPIPHLPAPQVTEPKGVLQSKRGTLVLRPAAVIDPRKPVSAPITRYERTALQPPRTEGEGRRPPDTQPVTLTFRLPPTAPTPATAALETKTTPPSTPPHAIDISPPQTPPMSTSPHARDTSPPAEKRAAPVIRVMAPTQPSGEARVKRVEIEQGLSTRNEAPPLERSNHAVPAVTPRRTVAREIRIPPEIKAGWDTAPDIPLPHSSPESSPPTSPQPIRVDDKSPLPNLVERYARGFLDTPSVEVMSLENQDIAVDPGLLTRRIPSVVPMPHPIMWSPIVPISLQNTDIDTAKITLISFIRRIKQKVAALSASLAETVDRIKKWYL</sequence>
<comment type="function">
    <text evidence="1 3">Large tegument protein that plays multiple roles in the viral cycle. During viral entry, remains associated with the capsid while most of the tegument is detached and participates in the capsid transport toward the host nucleus. Plays a role in the routing of the capsid at the nuclear pore complex and subsequent uncoating. Within the host nucleus, acts as a deneddylase and promotes the degradation of nuclear CRLs (cullin-RING ubiquitin ligases) and thereby stabilizes nuclear CRL substrates, while cytoplasmic CRLs remain unaffected. These modifications prevent host cell cycle S-phase progression and create a favorable environment allowing efficient viral genome replication. Participates later in the secondary envelopment of capsids. Indeed, plays a linker role for the association of the outer viral tegument to the capsids together with the inner tegument protein.</text>
</comment>
<comment type="catalytic activity">
    <reaction evidence="1">
        <text>Thiol-dependent hydrolysis of ester, thioester, amide, peptide and isopeptide bonds formed by the C-terminal Gly of ubiquitin (a 76-residue protein attached to proteins as an intracellular targeting signal).</text>
        <dbReference type="EC" id="3.4.19.12"/>
    </reaction>
</comment>
<comment type="subunit">
    <text evidence="1">Interacts with host CUL1 and CUL4A; these interactions inhibit the E3 ligase activity of cullins. Interacts with inner tegument protein. Interacts with capsid vertex specific component CVC2. Interacts with the major capsid protein/MCP.</text>
</comment>
<comment type="subcellular location">
    <subcellularLocation>
        <location evidence="1">Virion tegument</location>
    </subcellularLocation>
    <subcellularLocation>
        <location evidence="1">Host cytoplasm</location>
    </subcellularLocation>
    <subcellularLocation>
        <location evidence="1">Host nucleus</location>
    </subcellularLocation>
    <text evidence="1">Tightly associated with the capsid.</text>
</comment>
<comment type="similarity">
    <text evidence="1">Belongs to the herpesviridae large tegument protein family.</text>
</comment>
<evidence type="ECO:0000255" key="1">
    <source>
        <dbReference type="HAMAP-Rule" id="MF_04044"/>
    </source>
</evidence>
<evidence type="ECO:0000256" key="2">
    <source>
        <dbReference type="SAM" id="MobiDB-lite"/>
    </source>
</evidence>
<evidence type="ECO:0000269" key="3">
    <source>
    </source>
</evidence>
<organism>
    <name type="scientific">Human herpesvirus 8 type P (isolate GK18)</name>
    <name type="common">HHV-8</name>
    <name type="synonym">Kaposi's sarcoma-associated herpesvirus</name>
    <dbReference type="NCBI Taxonomy" id="868565"/>
    <lineage>
        <taxon>Viruses</taxon>
        <taxon>Duplodnaviria</taxon>
        <taxon>Heunggongvirae</taxon>
        <taxon>Peploviricota</taxon>
        <taxon>Herviviricetes</taxon>
        <taxon>Herpesvirales</taxon>
        <taxon>Orthoherpesviridae</taxon>
        <taxon>Gammaherpesvirinae</taxon>
        <taxon>Rhadinovirus</taxon>
        <taxon>Rhadinovirus humangamma8</taxon>
        <taxon>Human herpesvirus 8</taxon>
    </lineage>
</organism>
<name>LTP_HHV8P</name>
<gene>
    <name type="ORF">ORF64</name>
</gene>
<dbReference type="EC" id="3.4.19.12" evidence="1"/>
<dbReference type="EC" id="3.4.22.-" evidence="1"/>
<dbReference type="EMBL" id="AF148805">
    <property type="protein sequence ID" value="ABD28919.1"/>
    <property type="molecule type" value="Genomic_DNA"/>
</dbReference>
<dbReference type="RefSeq" id="YP_001129421.1">
    <property type="nucleotide sequence ID" value="NC_009333.1"/>
</dbReference>
<dbReference type="PDB" id="6PPB">
    <property type="method" value="EM"/>
    <property type="resolution" value="4.30 A"/>
    <property type="chains" value="n/o=1-2635"/>
</dbReference>
<dbReference type="PDB" id="6PPH">
    <property type="method" value="EM"/>
    <property type="resolution" value="3.80 A"/>
    <property type="chains" value="n/o=1-2635"/>
</dbReference>
<dbReference type="PDBsum" id="6PPB"/>
<dbReference type="PDBsum" id="6PPH"/>
<dbReference type="EMDB" id="EMD-20432"/>
<dbReference type="EMDB" id="EMD-20436"/>
<dbReference type="SMR" id="Q2HR64"/>
<dbReference type="BioGRID" id="1776944">
    <property type="interactions" value="3"/>
</dbReference>
<dbReference type="IntAct" id="Q2HR64">
    <property type="interactions" value="3"/>
</dbReference>
<dbReference type="GeneID" id="4961441"/>
<dbReference type="KEGG" id="vg:4961441"/>
<dbReference type="Proteomes" id="UP000000942">
    <property type="component" value="Segment"/>
</dbReference>
<dbReference type="GO" id="GO:0030430">
    <property type="term" value="C:host cell cytoplasm"/>
    <property type="evidence" value="ECO:0007669"/>
    <property type="project" value="UniProtKB-SubCell"/>
</dbReference>
<dbReference type="GO" id="GO:0042025">
    <property type="term" value="C:host cell nucleus"/>
    <property type="evidence" value="ECO:0007669"/>
    <property type="project" value="UniProtKB-SubCell"/>
</dbReference>
<dbReference type="GO" id="GO:0019030">
    <property type="term" value="C:icosahedral viral capsid"/>
    <property type="evidence" value="ECO:0000314"/>
    <property type="project" value="CACAO"/>
</dbReference>
<dbReference type="GO" id="GO:0019031">
    <property type="term" value="C:viral envelope"/>
    <property type="evidence" value="ECO:0000314"/>
    <property type="project" value="CACAO"/>
</dbReference>
<dbReference type="GO" id="GO:0019033">
    <property type="term" value="C:viral tegument"/>
    <property type="evidence" value="ECO:0007669"/>
    <property type="project" value="UniProtKB-SubCell"/>
</dbReference>
<dbReference type="GO" id="GO:0004843">
    <property type="term" value="F:cysteine-type deubiquitinase activity"/>
    <property type="evidence" value="ECO:0007669"/>
    <property type="project" value="UniProtKB-EC"/>
</dbReference>
<dbReference type="GO" id="GO:0006508">
    <property type="term" value="P:proteolysis"/>
    <property type="evidence" value="ECO:0007669"/>
    <property type="project" value="UniProtKB-KW"/>
</dbReference>
<dbReference type="GO" id="GO:0039648">
    <property type="term" value="P:symbiont-mediated perturbation of host ubiquitin-like protein modification"/>
    <property type="evidence" value="ECO:0007669"/>
    <property type="project" value="UniProtKB-KW"/>
</dbReference>
<dbReference type="Gene3D" id="3.90.70.120">
    <property type="match status" value="1"/>
</dbReference>
<dbReference type="HAMAP" id="MF_04044">
    <property type="entry name" value="HSV_LTP"/>
    <property type="match status" value="1"/>
</dbReference>
<dbReference type="InterPro" id="IPR006928">
    <property type="entry name" value="Herpes_teg_USP"/>
</dbReference>
<dbReference type="InterPro" id="IPR034702">
    <property type="entry name" value="HSV_LTP"/>
</dbReference>
<dbReference type="InterPro" id="IPR038765">
    <property type="entry name" value="Papain-like_cys_pep_sf"/>
</dbReference>
<dbReference type="Pfam" id="PF04843">
    <property type="entry name" value="Herpes_teg_N"/>
    <property type="match status" value="1"/>
</dbReference>
<dbReference type="SUPFAM" id="SSF54001">
    <property type="entry name" value="Cysteine proteinases"/>
    <property type="match status" value="1"/>
</dbReference>
<dbReference type="PROSITE" id="PS51521">
    <property type="entry name" value="HTUSP"/>
    <property type="match status" value="1"/>
</dbReference>
<proteinExistence type="evidence at protein level"/>
<accession>Q2HR64</accession>